<organism>
    <name type="scientific">Lactococcus lactis subsp. cremoris (strain SK11)</name>
    <dbReference type="NCBI Taxonomy" id="272622"/>
    <lineage>
        <taxon>Bacteria</taxon>
        <taxon>Bacillati</taxon>
        <taxon>Bacillota</taxon>
        <taxon>Bacilli</taxon>
        <taxon>Lactobacillales</taxon>
        <taxon>Streptococcaceae</taxon>
        <taxon>Lactococcus</taxon>
        <taxon>Lactococcus cremoris subsp. cremoris</taxon>
    </lineage>
</organism>
<protein>
    <recommendedName>
        <fullName evidence="1">Peptide methionine sulfoxide reductase MsrB</fullName>
        <ecNumber evidence="1">1.8.4.12</ecNumber>
    </recommendedName>
    <alternativeName>
        <fullName evidence="1">Peptide-methionine (R)-S-oxide reductase</fullName>
    </alternativeName>
</protein>
<feature type="chain" id="PRO_1000068275" description="Peptide methionine sulfoxide reductase MsrB">
    <location>
        <begin position="1"/>
        <end position="142"/>
    </location>
</feature>
<feature type="domain" description="MsrB" evidence="2">
    <location>
        <begin position="3"/>
        <end position="126"/>
    </location>
</feature>
<feature type="active site" description="Nucleophile" evidence="2">
    <location>
        <position position="115"/>
    </location>
</feature>
<reference key="1">
    <citation type="journal article" date="2006" name="Proc. Natl. Acad. Sci. U.S.A.">
        <title>Comparative genomics of the lactic acid bacteria.</title>
        <authorList>
            <person name="Makarova K.S."/>
            <person name="Slesarev A."/>
            <person name="Wolf Y.I."/>
            <person name="Sorokin A."/>
            <person name="Mirkin B."/>
            <person name="Koonin E.V."/>
            <person name="Pavlov A."/>
            <person name="Pavlova N."/>
            <person name="Karamychev V."/>
            <person name="Polouchine N."/>
            <person name="Shakhova V."/>
            <person name="Grigoriev I."/>
            <person name="Lou Y."/>
            <person name="Rohksar D."/>
            <person name="Lucas S."/>
            <person name="Huang K."/>
            <person name="Goodstein D.M."/>
            <person name="Hawkins T."/>
            <person name="Plengvidhya V."/>
            <person name="Welker D."/>
            <person name="Hughes J."/>
            <person name="Goh Y."/>
            <person name="Benson A."/>
            <person name="Baldwin K."/>
            <person name="Lee J.-H."/>
            <person name="Diaz-Muniz I."/>
            <person name="Dosti B."/>
            <person name="Smeianov V."/>
            <person name="Wechter W."/>
            <person name="Barabote R."/>
            <person name="Lorca G."/>
            <person name="Altermann E."/>
            <person name="Barrangou R."/>
            <person name="Ganesan B."/>
            <person name="Xie Y."/>
            <person name="Rawsthorne H."/>
            <person name="Tamir D."/>
            <person name="Parker C."/>
            <person name="Breidt F."/>
            <person name="Broadbent J.R."/>
            <person name="Hutkins R."/>
            <person name="O'Sullivan D."/>
            <person name="Steele J."/>
            <person name="Unlu G."/>
            <person name="Saier M.H. Jr."/>
            <person name="Klaenhammer T."/>
            <person name="Richardson P."/>
            <person name="Kozyavkin S."/>
            <person name="Weimer B.C."/>
            <person name="Mills D.A."/>
        </authorList>
    </citation>
    <scope>NUCLEOTIDE SEQUENCE [LARGE SCALE GENOMIC DNA]</scope>
    <source>
        <strain>SK11</strain>
    </source>
</reference>
<gene>
    <name evidence="1" type="primary">msrB</name>
    <name type="ordered locus">LACR_0195</name>
</gene>
<name>MSRB_LACLS</name>
<keyword id="KW-0560">Oxidoreductase</keyword>
<evidence type="ECO:0000255" key="1">
    <source>
        <dbReference type="HAMAP-Rule" id="MF_01400"/>
    </source>
</evidence>
<evidence type="ECO:0000255" key="2">
    <source>
        <dbReference type="PROSITE-ProRule" id="PRU01126"/>
    </source>
</evidence>
<dbReference type="EC" id="1.8.4.12" evidence="1"/>
<dbReference type="EMBL" id="CP000425">
    <property type="protein sequence ID" value="ABJ71813.1"/>
    <property type="molecule type" value="Genomic_DNA"/>
</dbReference>
<dbReference type="RefSeq" id="WP_011675246.1">
    <property type="nucleotide sequence ID" value="NC_008527.1"/>
</dbReference>
<dbReference type="SMR" id="Q032Q9"/>
<dbReference type="KEGG" id="llc:LACR_0195"/>
<dbReference type="HOGENOM" id="CLU_031040_8_5_9"/>
<dbReference type="Proteomes" id="UP000000240">
    <property type="component" value="Chromosome"/>
</dbReference>
<dbReference type="GO" id="GO:0005737">
    <property type="term" value="C:cytoplasm"/>
    <property type="evidence" value="ECO:0007669"/>
    <property type="project" value="TreeGrafter"/>
</dbReference>
<dbReference type="GO" id="GO:0033743">
    <property type="term" value="F:peptide-methionine (R)-S-oxide reductase activity"/>
    <property type="evidence" value="ECO:0007669"/>
    <property type="project" value="UniProtKB-UniRule"/>
</dbReference>
<dbReference type="GO" id="GO:0030091">
    <property type="term" value="P:protein repair"/>
    <property type="evidence" value="ECO:0007669"/>
    <property type="project" value="InterPro"/>
</dbReference>
<dbReference type="GO" id="GO:0006979">
    <property type="term" value="P:response to oxidative stress"/>
    <property type="evidence" value="ECO:0007669"/>
    <property type="project" value="InterPro"/>
</dbReference>
<dbReference type="FunFam" id="2.170.150.20:FF:000003">
    <property type="entry name" value="Peptide methionine sulfoxide reductase MsrB"/>
    <property type="match status" value="1"/>
</dbReference>
<dbReference type="Gene3D" id="2.170.150.20">
    <property type="entry name" value="Peptide methionine sulfoxide reductase"/>
    <property type="match status" value="1"/>
</dbReference>
<dbReference type="HAMAP" id="MF_01400">
    <property type="entry name" value="MsrB"/>
    <property type="match status" value="1"/>
</dbReference>
<dbReference type="InterPro" id="IPR028427">
    <property type="entry name" value="Met_Sox_Rdtase_MsrB"/>
</dbReference>
<dbReference type="InterPro" id="IPR002579">
    <property type="entry name" value="Met_Sox_Rdtase_MsrB_dom"/>
</dbReference>
<dbReference type="InterPro" id="IPR011057">
    <property type="entry name" value="Mss4-like_sf"/>
</dbReference>
<dbReference type="NCBIfam" id="TIGR00357">
    <property type="entry name" value="peptide-methionine (R)-S-oxide reductase MsrB"/>
    <property type="match status" value="1"/>
</dbReference>
<dbReference type="PANTHER" id="PTHR10173">
    <property type="entry name" value="METHIONINE SULFOXIDE REDUCTASE"/>
    <property type="match status" value="1"/>
</dbReference>
<dbReference type="PANTHER" id="PTHR10173:SF59">
    <property type="entry name" value="PEPTIDE METHIONINE SULFOXIDE REDUCTASE MSRA_MSRB"/>
    <property type="match status" value="1"/>
</dbReference>
<dbReference type="Pfam" id="PF01641">
    <property type="entry name" value="SelR"/>
    <property type="match status" value="1"/>
</dbReference>
<dbReference type="SUPFAM" id="SSF51316">
    <property type="entry name" value="Mss4-like"/>
    <property type="match status" value="1"/>
</dbReference>
<dbReference type="PROSITE" id="PS51790">
    <property type="entry name" value="MSRB"/>
    <property type="match status" value="1"/>
</dbReference>
<proteinExistence type="inferred from homology"/>
<sequence length="142" mass="16273">MKKEELKKKLSPLAYRVTQENGTEAPFTNEFDDFFEKGLYVDIVSGEPLFTSLDKYQSGCGWPAFTQPIDKKMVKEKRDKSLFMERTEVRSSNADSHLGHVFTDGPLDKGGLRYCINSAALRFIPFDQLESEGYGDYIKYFS</sequence>
<accession>Q032Q9</accession>
<comment type="catalytic activity">
    <reaction evidence="1">
        <text>L-methionyl-[protein] + [thioredoxin]-disulfide + H2O = L-methionyl-(R)-S-oxide-[protein] + [thioredoxin]-dithiol</text>
        <dbReference type="Rhea" id="RHEA:24164"/>
        <dbReference type="Rhea" id="RHEA-COMP:10698"/>
        <dbReference type="Rhea" id="RHEA-COMP:10700"/>
        <dbReference type="Rhea" id="RHEA-COMP:12313"/>
        <dbReference type="Rhea" id="RHEA-COMP:12314"/>
        <dbReference type="ChEBI" id="CHEBI:15377"/>
        <dbReference type="ChEBI" id="CHEBI:16044"/>
        <dbReference type="ChEBI" id="CHEBI:29950"/>
        <dbReference type="ChEBI" id="CHEBI:45764"/>
        <dbReference type="ChEBI" id="CHEBI:50058"/>
        <dbReference type="EC" id="1.8.4.12"/>
    </reaction>
</comment>
<comment type="similarity">
    <text evidence="1">Belongs to the MsrB Met sulfoxide reductase family.</text>
</comment>